<dbReference type="EC" id="4.2.1.20" evidence="1"/>
<dbReference type="EMBL" id="CU468135">
    <property type="protein sequence ID" value="CAO96645.1"/>
    <property type="molecule type" value="Genomic_DNA"/>
</dbReference>
<dbReference type="RefSeq" id="WP_012441338.1">
    <property type="nucleotide sequence ID" value="NC_010694.1"/>
</dbReference>
<dbReference type="SMR" id="B2VKT1"/>
<dbReference type="STRING" id="465817.ETA_15990"/>
<dbReference type="KEGG" id="eta:ETA_15990"/>
<dbReference type="eggNOG" id="COG0159">
    <property type="taxonomic scope" value="Bacteria"/>
</dbReference>
<dbReference type="HOGENOM" id="CLU_016734_0_4_6"/>
<dbReference type="OrthoDB" id="9804578at2"/>
<dbReference type="UniPathway" id="UPA00035">
    <property type="reaction ID" value="UER00044"/>
</dbReference>
<dbReference type="Proteomes" id="UP000001726">
    <property type="component" value="Chromosome"/>
</dbReference>
<dbReference type="GO" id="GO:0005829">
    <property type="term" value="C:cytosol"/>
    <property type="evidence" value="ECO:0007669"/>
    <property type="project" value="TreeGrafter"/>
</dbReference>
<dbReference type="GO" id="GO:0004834">
    <property type="term" value="F:tryptophan synthase activity"/>
    <property type="evidence" value="ECO:0007669"/>
    <property type="project" value="UniProtKB-UniRule"/>
</dbReference>
<dbReference type="CDD" id="cd04724">
    <property type="entry name" value="Tryptophan_synthase_alpha"/>
    <property type="match status" value="1"/>
</dbReference>
<dbReference type="FunFam" id="3.20.20.70:FF:000037">
    <property type="entry name" value="Tryptophan synthase alpha chain"/>
    <property type="match status" value="1"/>
</dbReference>
<dbReference type="Gene3D" id="3.20.20.70">
    <property type="entry name" value="Aldolase class I"/>
    <property type="match status" value="1"/>
</dbReference>
<dbReference type="HAMAP" id="MF_00131">
    <property type="entry name" value="Trp_synth_alpha"/>
    <property type="match status" value="1"/>
</dbReference>
<dbReference type="InterPro" id="IPR013785">
    <property type="entry name" value="Aldolase_TIM"/>
</dbReference>
<dbReference type="InterPro" id="IPR011060">
    <property type="entry name" value="RibuloseP-bd_barrel"/>
</dbReference>
<dbReference type="InterPro" id="IPR018204">
    <property type="entry name" value="Trp_synthase_alpha_AS"/>
</dbReference>
<dbReference type="InterPro" id="IPR002028">
    <property type="entry name" value="Trp_synthase_suA"/>
</dbReference>
<dbReference type="NCBIfam" id="TIGR00262">
    <property type="entry name" value="trpA"/>
    <property type="match status" value="1"/>
</dbReference>
<dbReference type="PANTHER" id="PTHR43406:SF1">
    <property type="entry name" value="TRYPTOPHAN SYNTHASE ALPHA CHAIN, CHLOROPLASTIC"/>
    <property type="match status" value="1"/>
</dbReference>
<dbReference type="PANTHER" id="PTHR43406">
    <property type="entry name" value="TRYPTOPHAN SYNTHASE, ALPHA CHAIN"/>
    <property type="match status" value="1"/>
</dbReference>
<dbReference type="Pfam" id="PF00290">
    <property type="entry name" value="Trp_syntA"/>
    <property type="match status" value="1"/>
</dbReference>
<dbReference type="SUPFAM" id="SSF51366">
    <property type="entry name" value="Ribulose-phoshate binding barrel"/>
    <property type="match status" value="1"/>
</dbReference>
<dbReference type="PROSITE" id="PS00167">
    <property type="entry name" value="TRP_SYNTHASE_ALPHA"/>
    <property type="match status" value="1"/>
</dbReference>
<gene>
    <name evidence="1" type="primary">trpA</name>
    <name type="ordered locus">ETA_15990</name>
</gene>
<protein>
    <recommendedName>
        <fullName evidence="1">Tryptophan synthase alpha chain</fullName>
        <ecNumber evidence="1">4.2.1.20</ecNumber>
    </recommendedName>
</protein>
<accession>B2VKT1</accession>
<organism>
    <name type="scientific">Erwinia tasmaniensis (strain DSM 17950 / CFBP 7177 / CIP 109463 / NCPPB 4357 / Et1/99)</name>
    <dbReference type="NCBI Taxonomy" id="465817"/>
    <lineage>
        <taxon>Bacteria</taxon>
        <taxon>Pseudomonadati</taxon>
        <taxon>Pseudomonadota</taxon>
        <taxon>Gammaproteobacteria</taxon>
        <taxon>Enterobacterales</taxon>
        <taxon>Erwiniaceae</taxon>
        <taxon>Erwinia</taxon>
    </lineage>
</organism>
<feature type="chain" id="PRO_1000095716" description="Tryptophan synthase alpha chain">
    <location>
        <begin position="1"/>
        <end position="268"/>
    </location>
</feature>
<feature type="active site" description="Proton acceptor" evidence="1">
    <location>
        <position position="49"/>
    </location>
</feature>
<feature type="active site" description="Proton acceptor" evidence="1">
    <location>
        <position position="60"/>
    </location>
</feature>
<reference key="1">
    <citation type="journal article" date="2008" name="Environ. Microbiol.">
        <title>The genome of Erwinia tasmaniensis strain Et1/99, a non-pathogenic bacterium in the genus Erwinia.</title>
        <authorList>
            <person name="Kube M."/>
            <person name="Migdoll A.M."/>
            <person name="Mueller I."/>
            <person name="Kuhl H."/>
            <person name="Beck A."/>
            <person name="Reinhardt R."/>
            <person name="Geider K."/>
        </authorList>
    </citation>
    <scope>NUCLEOTIDE SEQUENCE [LARGE SCALE GENOMIC DNA]</scope>
    <source>
        <strain>DSM 17950 / CFBP 7177 / CIP 109463 / NCPPB 4357 / Et1/99</strain>
    </source>
</reference>
<proteinExistence type="inferred from homology"/>
<evidence type="ECO:0000255" key="1">
    <source>
        <dbReference type="HAMAP-Rule" id="MF_00131"/>
    </source>
</evidence>
<name>TRPA_ERWT9</name>
<comment type="function">
    <text evidence="1">The alpha subunit is responsible for the aldol cleavage of indoleglycerol phosphate to indole and glyceraldehyde 3-phosphate.</text>
</comment>
<comment type="catalytic activity">
    <reaction evidence="1">
        <text>(1S,2R)-1-C-(indol-3-yl)glycerol 3-phosphate + L-serine = D-glyceraldehyde 3-phosphate + L-tryptophan + H2O</text>
        <dbReference type="Rhea" id="RHEA:10532"/>
        <dbReference type="ChEBI" id="CHEBI:15377"/>
        <dbReference type="ChEBI" id="CHEBI:33384"/>
        <dbReference type="ChEBI" id="CHEBI:57912"/>
        <dbReference type="ChEBI" id="CHEBI:58866"/>
        <dbReference type="ChEBI" id="CHEBI:59776"/>
        <dbReference type="EC" id="4.2.1.20"/>
    </reaction>
</comment>
<comment type="pathway">
    <text evidence="1">Amino-acid biosynthesis; L-tryptophan biosynthesis; L-tryptophan from chorismate: step 5/5.</text>
</comment>
<comment type="subunit">
    <text evidence="1">Tetramer of two alpha and two beta chains.</text>
</comment>
<comment type="similarity">
    <text evidence="1">Belongs to the TrpA family.</text>
</comment>
<keyword id="KW-0028">Amino-acid biosynthesis</keyword>
<keyword id="KW-0057">Aromatic amino acid biosynthesis</keyword>
<keyword id="KW-0456">Lyase</keyword>
<keyword id="KW-1185">Reference proteome</keyword>
<keyword id="KW-0822">Tryptophan biosynthesis</keyword>
<sequence length="268" mass="28568">MERYDLCFKRLAEKQEGAFVPFVTLGDPTPELSLQIIDALVAGGADALELGIPFSDPLADGPTIQNANLRAFAAGVTPEHCFDMLAAIRQKYPDMPIGLLMYANLVFSNGIDSFYARCQQVGVDSVLVADVPVEESAPFRQAAMRHNVAPIFICPPNAGDDLLREISSHGRGYTYLLSRAGVTGSETRASLPLKHLVDKLREYHAAPALQGFGISEASQVQQAISAGAAGAISGSAVVRIIEKHLNDPALMLSELTAFAASLKAATRS</sequence>